<organism>
    <name type="scientific">Homo sapiens</name>
    <name type="common">Human</name>
    <dbReference type="NCBI Taxonomy" id="9606"/>
    <lineage>
        <taxon>Eukaryota</taxon>
        <taxon>Metazoa</taxon>
        <taxon>Chordata</taxon>
        <taxon>Craniata</taxon>
        <taxon>Vertebrata</taxon>
        <taxon>Euteleostomi</taxon>
        <taxon>Mammalia</taxon>
        <taxon>Eutheria</taxon>
        <taxon>Euarchontoglires</taxon>
        <taxon>Primates</taxon>
        <taxon>Haplorrhini</taxon>
        <taxon>Catarrhini</taxon>
        <taxon>Hominidae</taxon>
        <taxon>Homo</taxon>
    </lineage>
</organism>
<dbReference type="EMBL" id="AF320560">
    <property type="protein sequence ID" value="AAK52672.1"/>
    <property type="molecule type" value="mRNA"/>
</dbReference>
<dbReference type="EMBL" id="BC002647">
    <property type="protein sequence ID" value="AAH02647.2"/>
    <property type="molecule type" value="mRNA"/>
</dbReference>
<dbReference type="EMBL" id="BC022096">
    <property type="protein sequence ID" value="AAH22096.1"/>
    <property type="molecule type" value="mRNA"/>
</dbReference>
<dbReference type="CCDS" id="CCDS2772.1"/>
<dbReference type="RefSeq" id="NP_149976.1">
    <property type="nucleotide sequence ID" value="NM_033199.4"/>
</dbReference>
<dbReference type="PDB" id="2RMG">
    <property type="method" value="NMR"/>
    <property type="chains" value="A=72-109"/>
</dbReference>
<dbReference type="PDB" id="3N95">
    <property type="method" value="X-ray"/>
    <property type="resolution" value="2.72 A"/>
    <property type="chains" value="E/F=94-109"/>
</dbReference>
<dbReference type="PDBsum" id="2RMG"/>
<dbReference type="PDBsum" id="3N95"/>
<dbReference type="SMR" id="Q96RP3"/>
<dbReference type="BioGRID" id="124679">
    <property type="interactions" value="2"/>
</dbReference>
<dbReference type="FunCoup" id="Q96RP3">
    <property type="interactions" value="523"/>
</dbReference>
<dbReference type="IntAct" id="Q96RP3">
    <property type="interactions" value="2"/>
</dbReference>
<dbReference type="STRING" id="9606.ENSP00000273610"/>
<dbReference type="BioMuta" id="UCN2"/>
<dbReference type="DMDM" id="20532289"/>
<dbReference type="MassIVE" id="Q96RP3"/>
<dbReference type="PaxDb" id="9606-ENSP00000273610"/>
<dbReference type="PeptideAtlas" id="Q96RP3"/>
<dbReference type="Antibodypedia" id="55296">
    <property type="antibodies" value="196 antibodies from 24 providers"/>
</dbReference>
<dbReference type="DNASU" id="90226"/>
<dbReference type="Ensembl" id="ENST00000273610.4">
    <property type="protein sequence ID" value="ENSP00000273610.3"/>
    <property type="gene ID" value="ENSG00000145040.4"/>
</dbReference>
<dbReference type="GeneID" id="90226"/>
<dbReference type="KEGG" id="hsa:90226"/>
<dbReference type="MANE-Select" id="ENST00000273610.4">
    <property type="protein sequence ID" value="ENSP00000273610.3"/>
    <property type="RefSeq nucleotide sequence ID" value="NM_033199.4"/>
    <property type="RefSeq protein sequence ID" value="NP_149976.1"/>
</dbReference>
<dbReference type="UCSC" id="uc003cty.2">
    <property type="organism name" value="human"/>
</dbReference>
<dbReference type="AGR" id="HGNC:18414"/>
<dbReference type="CTD" id="90226"/>
<dbReference type="DisGeNET" id="90226"/>
<dbReference type="GeneCards" id="UCN2"/>
<dbReference type="HGNC" id="HGNC:18414">
    <property type="gene designation" value="UCN2"/>
</dbReference>
<dbReference type="HPA" id="ENSG00000145040">
    <property type="expression patterns" value="Tissue enhanced (skin, vagina)"/>
</dbReference>
<dbReference type="MIM" id="605902">
    <property type="type" value="gene"/>
</dbReference>
<dbReference type="neXtProt" id="NX_Q96RP3"/>
<dbReference type="OpenTargets" id="ENSG00000145040"/>
<dbReference type="PharmGKB" id="PA133787055"/>
<dbReference type="VEuPathDB" id="HostDB:ENSG00000145040"/>
<dbReference type="eggNOG" id="ENOG502R23K">
    <property type="taxonomic scope" value="Eukaryota"/>
</dbReference>
<dbReference type="GeneTree" id="ENSGT00940000160568"/>
<dbReference type="HOGENOM" id="CLU_2145078_0_0_1"/>
<dbReference type="InParanoid" id="Q96RP3"/>
<dbReference type="OMA" id="TWPWAAQ"/>
<dbReference type="PAN-GO" id="Q96RP3">
    <property type="GO annotations" value="5 GO annotations based on evolutionary models"/>
</dbReference>
<dbReference type="PhylomeDB" id="Q96RP3"/>
<dbReference type="TreeFam" id="TF330723"/>
<dbReference type="PathwayCommons" id="Q96RP3"/>
<dbReference type="Reactome" id="R-HSA-373080">
    <property type="pathway name" value="Class B/2 (Secretin family receptors)"/>
</dbReference>
<dbReference type="SignaLink" id="Q96RP3"/>
<dbReference type="BioGRID-ORCS" id="90226">
    <property type="hits" value="11 hits in 1141 CRISPR screens"/>
</dbReference>
<dbReference type="EvolutionaryTrace" id="Q96RP3"/>
<dbReference type="GeneWiki" id="UCN2"/>
<dbReference type="GenomeRNAi" id="90226"/>
<dbReference type="Pharos" id="Q96RP3">
    <property type="development level" value="Tbio"/>
</dbReference>
<dbReference type="PRO" id="PR:Q96RP3"/>
<dbReference type="Proteomes" id="UP000005640">
    <property type="component" value="Chromosome 3"/>
</dbReference>
<dbReference type="RNAct" id="Q96RP3">
    <property type="molecule type" value="protein"/>
</dbReference>
<dbReference type="Bgee" id="ENSG00000145040">
    <property type="expression patterns" value="Expressed in stromal cell of endometrium and 72 other cell types or tissues"/>
</dbReference>
<dbReference type="GO" id="GO:0005576">
    <property type="term" value="C:extracellular region"/>
    <property type="evidence" value="ECO:0000304"/>
    <property type="project" value="Reactome"/>
</dbReference>
<dbReference type="GO" id="GO:0005615">
    <property type="term" value="C:extracellular space"/>
    <property type="evidence" value="ECO:0000318"/>
    <property type="project" value="GO_Central"/>
</dbReference>
<dbReference type="GO" id="GO:0051431">
    <property type="term" value="F:corticotropin-releasing hormone receptor 2 binding"/>
    <property type="evidence" value="ECO:0007669"/>
    <property type="project" value="InterPro"/>
</dbReference>
<dbReference type="GO" id="GO:0051429">
    <property type="term" value="F:corticotropin-releasing hormone receptor binding"/>
    <property type="evidence" value="ECO:0000353"/>
    <property type="project" value="UniProtKB"/>
</dbReference>
<dbReference type="GO" id="GO:0005179">
    <property type="term" value="F:hormone activity"/>
    <property type="evidence" value="ECO:0007669"/>
    <property type="project" value="UniProtKB-KW"/>
</dbReference>
<dbReference type="GO" id="GO:0042562">
    <property type="term" value="F:hormone binding"/>
    <property type="evidence" value="ECO:0000353"/>
    <property type="project" value="UniProtKB"/>
</dbReference>
<dbReference type="GO" id="GO:0007189">
    <property type="term" value="P:adenylate cyclase-activating G protein-coupled receptor signaling pathway"/>
    <property type="evidence" value="ECO:0000314"/>
    <property type="project" value="UniProtKB"/>
</dbReference>
<dbReference type="GO" id="GO:0031669">
    <property type="term" value="P:cellular response to nutrient levels"/>
    <property type="evidence" value="ECO:0000318"/>
    <property type="project" value="GO_Central"/>
</dbReference>
<dbReference type="GO" id="GO:0007586">
    <property type="term" value="P:digestion"/>
    <property type="evidence" value="ECO:0000303"/>
    <property type="project" value="UniProtKB"/>
</dbReference>
<dbReference type="GO" id="GO:0009755">
    <property type="term" value="P:hormone-mediated signaling pathway"/>
    <property type="evidence" value="ECO:0000314"/>
    <property type="project" value="UniProtKB"/>
</dbReference>
<dbReference type="InterPro" id="IPR000187">
    <property type="entry name" value="CRF"/>
</dbReference>
<dbReference type="InterPro" id="IPR024270">
    <property type="entry name" value="Urocortin_II/III"/>
</dbReference>
<dbReference type="PANTHER" id="PTHR17575:SF0">
    <property type="entry name" value="UROCORTIN-2"/>
    <property type="match status" value="1"/>
</dbReference>
<dbReference type="PANTHER" id="PTHR17575">
    <property type="entry name" value="UROCORTIN-2 AND 3"/>
    <property type="match status" value="1"/>
</dbReference>
<dbReference type="Pfam" id="PF00473">
    <property type="entry name" value="CRF"/>
    <property type="match status" value="1"/>
</dbReference>
<proteinExistence type="evidence at protein level"/>
<accession>Q96RP3</accession>
<accession>Q9BUG0</accession>
<gene>
    <name type="primary">UCN2</name>
    <name type="synonym">SRP</name>
    <name type="synonym">URP</name>
</gene>
<reference key="1">
    <citation type="journal article" date="2001" name="Nat. Med.">
        <title>Human stresscopin and stresscopin-related peptide are selective ligands for the type 2 corticotropin-releasing hormone receptor.</title>
        <authorList>
            <person name="Hsu S.Y."/>
            <person name="Hsueh A.J.W."/>
        </authorList>
    </citation>
    <scope>NUCLEOTIDE SEQUENCE [MRNA]</scope>
</reference>
<reference key="2">
    <citation type="journal article" date="2004" name="Genome Res.">
        <title>The status, quality, and expansion of the NIH full-length cDNA project: the Mammalian Gene Collection (MGC).</title>
        <authorList>
            <consortium name="The MGC Project Team"/>
        </authorList>
    </citation>
    <scope>NUCLEOTIDE SEQUENCE [LARGE SCALE MRNA]</scope>
    <source>
        <tissue>Skin</tissue>
        <tissue>Uterus</tissue>
    </source>
</reference>
<reference key="3">
    <citation type="journal article" date="2013" name="Endocrinology">
        <title>Posttranslational processing of human and mouse urocortin 2: characterization and bioactivity of gene products.</title>
        <authorList>
            <person name="Vaughan J.M."/>
            <person name="Donaldson C.J."/>
            <person name="Fischer W.H."/>
            <person name="Perrin M.H."/>
            <person name="Rivier J.E."/>
            <person name="Sawchenko P.E."/>
            <person name="Vale W.W."/>
        </authorList>
    </citation>
    <scope>LACK OF AMIDATION</scope>
</reference>
<reference key="4">
    <citation type="journal article" date="2007" name="J. Am. Chem. Soc.">
        <title>Common and divergent structural features of a series of corticotropin releasing factor-related peptides.</title>
        <authorList>
            <person name="Grace C.R.R."/>
            <person name="Perrin M.H."/>
            <person name="Cantle J.P."/>
            <person name="Vale W.W."/>
            <person name="Rivier J.E."/>
            <person name="Riek R."/>
        </authorList>
    </citation>
    <scope>STRUCTURE BY NMR OF 72-109</scope>
</reference>
<reference key="5">
    <citation type="journal article" date="2010" name="J. Biol. Chem.">
        <title>Structural basis for hormone recognition by the Human CRFR2{alpha} G protein-coupled receptor.</title>
        <authorList>
            <person name="Pal K."/>
            <person name="Swaminathan K."/>
            <person name="Xu H.E."/>
            <person name="Pioszak A.A."/>
        </authorList>
    </citation>
    <scope>X-RAY CRYSTALLOGRAPHY (2.72 ANGSTROMS) OF 94-109 IN COMPLEX WITH CRHR2</scope>
</reference>
<sequence length="112" mass="12146">MTRCALLLLMVLMLGRVLVVPVTPIPTFQLRPQNSPQTTPRPAASESPSAAPTWPWAAQSHCSPTRHPGSRIVLSLDVPIGLLQILLEQARARAAREQATTNARILARVGHC</sequence>
<name>UCN2_HUMAN</name>
<comment type="function">
    <text>Suppresses food intake, delays gastric emptying and decreases heat-induced edema. Might represent an endogenous ligand for maintaining homeostasis after stress.</text>
</comment>
<comment type="subunit">
    <text evidence="3">Binds with high affinity to CRF receptors 2-alpha and 2-beta.</text>
</comment>
<comment type="subcellular location">
    <subcellularLocation>
        <location>Secreted</location>
    </subcellularLocation>
</comment>
<comment type="PTM">
    <text evidence="1">Glycosylated.</text>
</comment>
<comment type="similarity">
    <text evidence="4">Belongs to the sauvagine/corticotropin-releasing factor/urotensin I family.</text>
</comment>
<evidence type="ECO:0000250" key="1"/>
<evidence type="ECO:0000256" key="2">
    <source>
        <dbReference type="SAM" id="MobiDB-lite"/>
    </source>
</evidence>
<evidence type="ECO:0000269" key="3">
    <source>
    </source>
</evidence>
<evidence type="ECO:0000305" key="4"/>
<evidence type="ECO:0007829" key="5">
    <source>
        <dbReference type="PDB" id="2RMG"/>
    </source>
</evidence>
<evidence type="ECO:0007829" key="6">
    <source>
        <dbReference type="PDB" id="3N95"/>
    </source>
</evidence>
<protein>
    <recommendedName>
        <fullName>Urocortin-2</fullName>
    </recommendedName>
    <alternativeName>
        <fullName>Stresscopin-related peptide</fullName>
    </alternativeName>
    <alternativeName>
        <fullName>Urocortin II</fullName>
        <shortName>Ucn II</shortName>
    </alternativeName>
    <alternativeName>
        <fullName>Urocortin-related peptide</fullName>
    </alternativeName>
</protein>
<feature type="signal peptide" evidence="1">
    <location>
        <begin position="1"/>
        <end position="22"/>
    </location>
</feature>
<feature type="propeptide" id="PRO_0000006239" evidence="1">
    <location>
        <begin position="23"/>
        <end position="70"/>
    </location>
</feature>
<feature type="chain" id="PRO_0000006240" description="Urocortin-2">
    <location>
        <begin position="72"/>
        <end position="112"/>
    </location>
</feature>
<feature type="region of interest" description="Disordered" evidence="2">
    <location>
        <begin position="27"/>
        <end position="66"/>
    </location>
</feature>
<feature type="compositionally biased region" description="Low complexity" evidence="2">
    <location>
        <begin position="38"/>
        <end position="58"/>
    </location>
</feature>
<feature type="helix" evidence="5">
    <location>
        <begin position="80"/>
        <end position="88"/>
    </location>
</feature>
<feature type="helix" evidence="6">
    <location>
        <begin position="95"/>
        <end position="108"/>
    </location>
</feature>
<keyword id="KW-0002">3D-structure</keyword>
<keyword id="KW-0325">Glycoprotein</keyword>
<keyword id="KW-0372">Hormone</keyword>
<keyword id="KW-1185">Reference proteome</keyword>
<keyword id="KW-0964">Secreted</keyword>
<keyword id="KW-0732">Signal</keyword>